<comment type="function">
    <text evidence="3">Possible transcription factor.</text>
</comment>
<comment type="subcellular location">
    <subcellularLocation>
        <location evidence="3">Nucleus</location>
    </subcellularLocation>
</comment>
<comment type="similarity">
    <text evidence="3">Belongs to the vasculin family.</text>
</comment>
<comment type="sequence caution" evidence="3">
    <conflict type="erroneous termination">
        <sequence resource="EMBL-CDS" id="BAC36644"/>
    </conflict>
    <text>Extended C-terminus.</text>
</comment>
<feature type="chain" id="PRO_0000324116" description="Vasculin-like protein 1">
    <location>
        <begin position="1"/>
        <end position="473"/>
    </location>
</feature>
<feature type="region of interest" description="Disordered" evidence="2">
    <location>
        <begin position="14"/>
        <end position="55"/>
    </location>
</feature>
<feature type="region of interest" description="Disordered" evidence="2">
    <location>
        <begin position="88"/>
        <end position="127"/>
    </location>
</feature>
<feature type="region of interest" description="Disordered" evidence="2">
    <location>
        <begin position="155"/>
        <end position="189"/>
    </location>
</feature>
<feature type="region of interest" description="Disordered" evidence="2">
    <location>
        <begin position="235"/>
        <end position="267"/>
    </location>
</feature>
<feature type="region of interest" description="Disordered" evidence="2">
    <location>
        <begin position="281"/>
        <end position="316"/>
    </location>
</feature>
<feature type="region of interest" description="Disordered" evidence="2">
    <location>
        <begin position="453"/>
        <end position="473"/>
    </location>
</feature>
<feature type="compositionally biased region" description="Polar residues" evidence="2">
    <location>
        <begin position="14"/>
        <end position="25"/>
    </location>
</feature>
<feature type="compositionally biased region" description="Basic and acidic residues" evidence="2">
    <location>
        <begin position="26"/>
        <end position="38"/>
    </location>
</feature>
<feature type="compositionally biased region" description="Polar residues" evidence="2">
    <location>
        <begin position="103"/>
        <end position="112"/>
    </location>
</feature>
<feature type="compositionally biased region" description="Basic residues" evidence="2">
    <location>
        <begin position="113"/>
        <end position="125"/>
    </location>
</feature>
<feature type="compositionally biased region" description="Low complexity" evidence="2">
    <location>
        <begin position="292"/>
        <end position="309"/>
    </location>
</feature>
<feature type="modified residue" description="Phosphoserine" evidence="5">
    <location>
        <position position="49"/>
    </location>
</feature>
<feature type="modified residue" description="Phosphoserine" evidence="4">
    <location>
        <position position="76"/>
    </location>
</feature>
<feature type="modified residue" description="Phosphoserine" evidence="1">
    <location>
        <position position="199"/>
    </location>
</feature>
<feature type="modified residue" description="Phosphoserine" evidence="5">
    <location>
        <position position="289"/>
    </location>
</feature>
<feature type="modified residue" description="Phosphothreonine" evidence="1">
    <location>
        <position position="298"/>
    </location>
</feature>
<feature type="modified residue" description="Phosphoserine" evidence="1">
    <location>
        <position position="381"/>
    </location>
</feature>
<feature type="sequence conflict" description="In Ref. 1; BAC29763." evidence="3" ref="1">
    <original>R</original>
    <variation>G</variation>
    <location>
        <position position="138"/>
    </location>
</feature>
<feature type="sequence conflict" description="In Ref. 2; AAH31428." evidence="3" ref="2">
    <original>G</original>
    <variation>R</variation>
    <location>
        <position position="377"/>
    </location>
</feature>
<feature type="sequence conflict" description="In Ref. 2; AAH31428." evidence="3" ref="2">
    <original>S</original>
    <variation>N</variation>
    <location>
        <position position="441"/>
    </location>
</feature>
<feature type="sequence conflict" description="In Ref. 2; AAH31428." evidence="3" ref="2">
    <original>S</original>
    <variation>T</variation>
    <location>
        <position position="459"/>
    </location>
</feature>
<dbReference type="EMBL" id="AK019942">
    <property type="protein sequence ID" value="BAB31926.1"/>
    <property type="molecule type" value="mRNA"/>
</dbReference>
<dbReference type="EMBL" id="AK037224">
    <property type="protein sequence ID" value="BAC29763.1"/>
    <property type="molecule type" value="mRNA"/>
</dbReference>
<dbReference type="EMBL" id="AK077148">
    <property type="protein sequence ID" value="BAC36644.1"/>
    <property type="status" value="ALT_SEQ"/>
    <property type="molecule type" value="mRNA"/>
</dbReference>
<dbReference type="EMBL" id="AK133761">
    <property type="protein sequence ID" value="BAE21827.1"/>
    <property type="molecule type" value="mRNA"/>
</dbReference>
<dbReference type="EMBL" id="BC031428">
    <property type="protein sequence ID" value="AAH31428.1"/>
    <property type="molecule type" value="mRNA"/>
</dbReference>
<dbReference type="EMBL" id="BC066034">
    <property type="protein sequence ID" value="AAH66034.1"/>
    <property type="molecule type" value="mRNA"/>
</dbReference>
<dbReference type="CCDS" id="CCDS18511.1"/>
<dbReference type="RefSeq" id="NP_001355106.1">
    <property type="nucleotide sequence ID" value="NM_001368177.1"/>
</dbReference>
<dbReference type="RefSeq" id="NP_084144.2">
    <property type="nucleotide sequence ID" value="NM_029868.2"/>
</dbReference>
<dbReference type="RefSeq" id="XP_006503548.1">
    <property type="nucleotide sequence ID" value="XM_006503485.5"/>
</dbReference>
<dbReference type="RefSeq" id="XP_017175941.1">
    <property type="nucleotide sequence ID" value="XM_017320452.3"/>
</dbReference>
<dbReference type="BioGRID" id="218520">
    <property type="interactions" value="4"/>
</dbReference>
<dbReference type="FunCoup" id="Q6NZP2">
    <property type="interactions" value="3170"/>
</dbReference>
<dbReference type="STRING" id="10090.ENSMUSP00000030460"/>
<dbReference type="iPTMnet" id="Q6NZP2"/>
<dbReference type="PhosphoSitePlus" id="Q6NZP2"/>
<dbReference type="jPOST" id="Q6NZP2"/>
<dbReference type="PaxDb" id="10090-ENSMUSP00000030460"/>
<dbReference type="ProteomicsDB" id="271313"/>
<dbReference type="Pumba" id="Q6NZP2"/>
<dbReference type="Antibodypedia" id="32691">
    <property type="antibodies" value="59 antibodies from 18 providers"/>
</dbReference>
<dbReference type="Ensembl" id="ENSMUST00000030460.15">
    <property type="protein sequence ID" value="ENSMUSP00000030460.9"/>
    <property type="gene ID" value="ENSMUSG00000034042.17"/>
</dbReference>
<dbReference type="Ensembl" id="ENSMUST00000106475.2">
    <property type="protein sequence ID" value="ENSMUSP00000102083.2"/>
    <property type="gene ID" value="ENSMUSG00000034042.17"/>
</dbReference>
<dbReference type="GeneID" id="77110"/>
<dbReference type="KEGG" id="mmu:77110"/>
<dbReference type="UCSC" id="uc008ugr.1">
    <property type="organism name" value="mouse"/>
</dbReference>
<dbReference type="AGR" id="MGI:1924360"/>
<dbReference type="CTD" id="60313"/>
<dbReference type="MGI" id="MGI:1924360">
    <property type="gene designation" value="Gpbp1l1"/>
</dbReference>
<dbReference type="VEuPathDB" id="HostDB:ENSMUSG00000034042"/>
<dbReference type="eggNOG" id="ENOG502QPN2">
    <property type="taxonomic scope" value="Eukaryota"/>
</dbReference>
<dbReference type="GeneTree" id="ENSGT00420000029753"/>
<dbReference type="HOGENOM" id="CLU_045487_0_0_1"/>
<dbReference type="InParanoid" id="Q6NZP2"/>
<dbReference type="OMA" id="AGRQNNQ"/>
<dbReference type="OrthoDB" id="8741226at2759"/>
<dbReference type="PhylomeDB" id="Q6NZP2"/>
<dbReference type="TreeFam" id="TF332220"/>
<dbReference type="BioGRID-ORCS" id="77110">
    <property type="hits" value="1 hit in 77 CRISPR screens"/>
</dbReference>
<dbReference type="ChiTaRS" id="Gpbp1l1">
    <property type="organism name" value="mouse"/>
</dbReference>
<dbReference type="PRO" id="PR:Q6NZP2"/>
<dbReference type="Proteomes" id="UP000000589">
    <property type="component" value="Chromosome 4"/>
</dbReference>
<dbReference type="RNAct" id="Q6NZP2">
    <property type="molecule type" value="protein"/>
</dbReference>
<dbReference type="Bgee" id="ENSMUSG00000034042">
    <property type="expression patterns" value="Expressed in spermatocyte and 64 other cell types or tissues"/>
</dbReference>
<dbReference type="GO" id="GO:0005634">
    <property type="term" value="C:nucleus"/>
    <property type="evidence" value="ECO:0007669"/>
    <property type="project" value="UniProtKB-SubCell"/>
</dbReference>
<dbReference type="GO" id="GO:0003677">
    <property type="term" value="F:DNA binding"/>
    <property type="evidence" value="ECO:0007669"/>
    <property type="project" value="UniProtKB-KW"/>
</dbReference>
<dbReference type="GO" id="GO:0003723">
    <property type="term" value="F:RNA binding"/>
    <property type="evidence" value="ECO:0007669"/>
    <property type="project" value="InterPro"/>
</dbReference>
<dbReference type="GO" id="GO:0006351">
    <property type="term" value="P:DNA-templated transcription"/>
    <property type="evidence" value="ECO:0007669"/>
    <property type="project" value="InterPro"/>
</dbReference>
<dbReference type="GO" id="GO:0045893">
    <property type="term" value="P:positive regulation of DNA-templated transcription"/>
    <property type="evidence" value="ECO:0007669"/>
    <property type="project" value="InterPro"/>
</dbReference>
<dbReference type="InterPro" id="IPR028128">
    <property type="entry name" value="Vasculin_fam"/>
</dbReference>
<dbReference type="PANTHER" id="PTHR14339">
    <property type="entry name" value="VASCULIN"/>
    <property type="match status" value="1"/>
</dbReference>
<dbReference type="PANTHER" id="PTHR14339:SF10">
    <property type="entry name" value="VASCULIN-LIKE PROTEIN 1"/>
    <property type="match status" value="1"/>
</dbReference>
<dbReference type="Pfam" id="PF15337">
    <property type="entry name" value="Vasculin"/>
    <property type="match status" value="1"/>
</dbReference>
<protein>
    <recommendedName>
        <fullName>Vasculin-like protein 1</fullName>
    </recommendedName>
    <alternativeName>
        <fullName>GC-rich promoter-binding protein 1-like 1</fullName>
    </alternativeName>
</protein>
<reference key="1">
    <citation type="journal article" date="2005" name="Science">
        <title>The transcriptional landscape of the mammalian genome.</title>
        <authorList>
            <person name="Carninci P."/>
            <person name="Kasukawa T."/>
            <person name="Katayama S."/>
            <person name="Gough J."/>
            <person name="Frith M.C."/>
            <person name="Maeda N."/>
            <person name="Oyama R."/>
            <person name="Ravasi T."/>
            <person name="Lenhard B."/>
            <person name="Wells C."/>
            <person name="Kodzius R."/>
            <person name="Shimokawa K."/>
            <person name="Bajic V.B."/>
            <person name="Brenner S.E."/>
            <person name="Batalov S."/>
            <person name="Forrest A.R."/>
            <person name="Zavolan M."/>
            <person name="Davis M.J."/>
            <person name="Wilming L.G."/>
            <person name="Aidinis V."/>
            <person name="Allen J.E."/>
            <person name="Ambesi-Impiombato A."/>
            <person name="Apweiler R."/>
            <person name="Aturaliya R.N."/>
            <person name="Bailey T.L."/>
            <person name="Bansal M."/>
            <person name="Baxter L."/>
            <person name="Beisel K.W."/>
            <person name="Bersano T."/>
            <person name="Bono H."/>
            <person name="Chalk A.M."/>
            <person name="Chiu K.P."/>
            <person name="Choudhary V."/>
            <person name="Christoffels A."/>
            <person name="Clutterbuck D.R."/>
            <person name="Crowe M.L."/>
            <person name="Dalla E."/>
            <person name="Dalrymple B.P."/>
            <person name="de Bono B."/>
            <person name="Della Gatta G."/>
            <person name="di Bernardo D."/>
            <person name="Down T."/>
            <person name="Engstrom P."/>
            <person name="Fagiolini M."/>
            <person name="Faulkner G."/>
            <person name="Fletcher C.F."/>
            <person name="Fukushima T."/>
            <person name="Furuno M."/>
            <person name="Futaki S."/>
            <person name="Gariboldi M."/>
            <person name="Georgii-Hemming P."/>
            <person name="Gingeras T.R."/>
            <person name="Gojobori T."/>
            <person name="Green R.E."/>
            <person name="Gustincich S."/>
            <person name="Harbers M."/>
            <person name="Hayashi Y."/>
            <person name="Hensch T.K."/>
            <person name="Hirokawa N."/>
            <person name="Hill D."/>
            <person name="Huminiecki L."/>
            <person name="Iacono M."/>
            <person name="Ikeo K."/>
            <person name="Iwama A."/>
            <person name="Ishikawa T."/>
            <person name="Jakt M."/>
            <person name="Kanapin A."/>
            <person name="Katoh M."/>
            <person name="Kawasawa Y."/>
            <person name="Kelso J."/>
            <person name="Kitamura H."/>
            <person name="Kitano H."/>
            <person name="Kollias G."/>
            <person name="Krishnan S.P."/>
            <person name="Kruger A."/>
            <person name="Kummerfeld S.K."/>
            <person name="Kurochkin I.V."/>
            <person name="Lareau L.F."/>
            <person name="Lazarevic D."/>
            <person name="Lipovich L."/>
            <person name="Liu J."/>
            <person name="Liuni S."/>
            <person name="McWilliam S."/>
            <person name="Madan Babu M."/>
            <person name="Madera M."/>
            <person name="Marchionni L."/>
            <person name="Matsuda H."/>
            <person name="Matsuzawa S."/>
            <person name="Miki H."/>
            <person name="Mignone F."/>
            <person name="Miyake S."/>
            <person name="Morris K."/>
            <person name="Mottagui-Tabar S."/>
            <person name="Mulder N."/>
            <person name="Nakano N."/>
            <person name="Nakauchi H."/>
            <person name="Ng P."/>
            <person name="Nilsson R."/>
            <person name="Nishiguchi S."/>
            <person name="Nishikawa S."/>
            <person name="Nori F."/>
            <person name="Ohara O."/>
            <person name="Okazaki Y."/>
            <person name="Orlando V."/>
            <person name="Pang K.C."/>
            <person name="Pavan W.J."/>
            <person name="Pavesi G."/>
            <person name="Pesole G."/>
            <person name="Petrovsky N."/>
            <person name="Piazza S."/>
            <person name="Reed J."/>
            <person name="Reid J.F."/>
            <person name="Ring B.Z."/>
            <person name="Ringwald M."/>
            <person name="Rost B."/>
            <person name="Ruan Y."/>
            <person name="Salzberg S.L."/>
            <person name="Sandelin A."/>
            <person name="Schneider C."/>
            <person name="Schoenbach C."/>
            <person name="Sekiguchi K."/>
            <person name="Semple C.A."/>
            <person name="Seno S."/>
            <person name="Sessa L."/>
            <person name="Sheng Y."/>
            <person name="Shibata Y."/>
            <person name="Shimada H."/>
            <person name="Shimada K."/>
            <person name="Silva D."/>
            <person name="Sinclair B."/>
            <person name="Sperling S."/>
            <person name="Stupka E."/>
            <person name="Sugiura K."/>
            <person name="Sultana R."/>
            <person name="Takenaka Y."/>
            <person name="Taki K."/>
            <person name="Tammoja K."/>
            <person name="Tan S.L."/>
            <person name="Tang S."/>
            <person name="Taylor M.S."/>
            <person name="Tegner J."/>
            <person name="Teichmann S.A."/>
            <person name="Ueda H.R."/>
            <person name="van Nimwegen E."/>
            <person name="Verardo R."/>
            <person name="Wei C.L."/>
            <person name="Yagi K."/>
            <person name="Yamanishi H."/>
            <person name="Zabarovsky E."/>
            <person name="Zhu S."/>
            <person name="Zimmer A."/>
            <person name="Hide W."/>
            <person name="Bult C."/>
            <person name="Grimmond S.M."/>
            <person name="Teasdale R.D."/>
            <person name="Liu E.T."/>
            <person name="Brusic V."/>
            <person name="Quackenbush J."/>
            <person name="Wahlestedt C."/>
            <person name="Mattick J.S."/>
            <person name="Hume D.A."/>
            <person name="Kai C."/>
            <person name="Sasaki D."/>
            <person name="Tomaru Y."/>
            <person name="Fukuda S."/>
            <person name="Kanamori-Katayama M."/>
            <person name="Suzuki M."/>
            <person name="Aoki J."/>
            <person name="Arakawa T."/>
            <person name="Iida J."/>
            <person name="Imamura K."/>
            <person name="Itoh M."/>
            <person name="Kato T."/>
            <person name="Kawaji H."/>
            <person name="Kawagashira N."/>
            <person name="Kawashima T."/>
            <person name="Kojima M."/>
            <person name="Kondo S."/>
            <person name="Konno H."/>
            <person name="Nakano K."/>
            <person name="Ninomiya N."/>
            <person name="Nishio T."/>
            <person name="Okada M."/>
            <person name="Plessy C."/>
            <person name="Shibata K."/>
            <person name="Shiraki T."/>
            <person name="Suzuki S."/>
            <person name="Tagami M."/>
            <person name="Waki K."/>
            <person name="Watahiki A."/>
            <person name="Okamura-Oho Y."/>
            <person name="Suzuki H."/>
            <person name="Kawai J."/>
            <person name="Hayashizaki Y."/>
        </authorList>
    </citation>
    <scope>NUCLEOTIDE SEQUENCE [LARGE SCALE MRNA]</scope>
    <source>
        <strain>C57BL/6J</strain>
        <tissue>Embryo</tissue>
        <tissue>Pituitary</tissue>
        <tissue>Skin</tissue>
        <tissue>Testis</tissue>
    </source>
</reference>
<reference key="2">
    <citation type="journal article" date="2004" name="Genome Res.">
        <title>The status, quality, and expansion of the NIH full-length cDNA project: the Mammalian Gene Collection (MGC).</title>
        <authorList>
            <consortium name="The MGC Project Team"/>
        </authorList>
    </citation>
    <scope>NUCLEOTIDE SEQUENCE [LARGE SCALE MRNA]</scope>
    <source>
        <strain>C57BL/6J</strain>
        <strain>Czech II</strain>
        <tissue>Brain</tissue>
        <tissue>Mammary tumor</tissue>
    </source>
</reference>
<reference key="3">
    <citation type="journal article" date="2009" name="Immunity">
        <title>The phagosomal proteome in interferon-gamma-activated macrophages.</title>
        <authorList>
            <person name="Trost M."/>
            <person name="English L."/>
            <person name="Lemieux S."/>
            <person name="Courcelles M."/>
            <person name="Desjardins M."/>
            <person name="Thibault P."/>
        </authorList>
    </citation>
    <scope>PHOSPHORYLATION [LARGE SCALE ANALYSIS] AT SER-76</scope>
    <scope>IDENTIFICATION BY MASS SPECTROMETRY [LARGE SCALE ANALYSIS]</scope>
</reference>
<reference key="4">
    <citation type="journal article" date="2010" name="Cell">
        <title>A tissue-specific atlas of mouse protein phosphorylation and expression.</title>
        <authorList>
            <person name="Huttlin E.L."/>
            <person name="Jedrychowski M.P."/>
            <person name="Elias J.E."/>
            <person name="Goswami T."/>
            <person name="Rad R."/>
            <person name="Beausoleil S.A."/>
            <person name="Villen J."/>
            <person name="Haas W."/>
            <person name="Sowa M.E."/>
            <person name="Gygi S.P."/>
        </authorList>
    </citation>
    <scope>PHOSPHORYLATION [LARGE SCALE ANALYSIS] AT SER-49 AND SER-289</scope>
    <scope>IDENTIFICATION BY MASS SPECTROMETRY [LARGE SCALE ANALYSIS]</scope>
    <source>
        <tissue>Brown adipose tissue</tissue>
        <tissue>Kidney</tissue>
        <tissue>Lung</tissue>
        <tissue>Spleen</tissue>
    </source>
</reference>
<proteinExistence type="evidence at protein level"/>
<accession>Q6NZP2</accession>
<accession>Q8BHW7</accession>
<accession>Q8BI03</accession>
<accession>Q8K2H8</accession>
<accession>Q9CTV6</accession>
<organism>
    <name type="scientific">Mus musculus</name>
    <name type="common">Mouse</name>
    <dbReference type="NCBI Taxonomy" id="10090"/>
    <lineage>
        <taxon>Eukaryota</taxon>
        <taxon>Metazoa</taxon>
        <taxon>Chordata</taxon>
        <taxon>Craniata</taxon>
        <taxon>Vertebrata</taxon>
        <taxon>Euteleostomi</taxon>
        <taxon>Mammalia</taxon>
        <taxon>Eutheria</taxon>
        <taxon>Euarchontoglires</taxon>
        <taxon>Glires</taxon>
        <taxon>Rodentia</taxon>
        <taxon>Myomorpha</taxon>
        <taxon>Muroidea</taxon>
        <taxon>Muridae</taxon>
        <taxon>Murinae</taxon>
        <taxon>Mus</taxon>
        <taxon>Mus</taxon>
    </lineage>
</organism>
<name>GPBL1_MOUSE</name>
<keyword id="KW-0238">DNA-binding</keyword>
<keyword id="KW-0539">Nucleus</keyword>
<keyword id="KW-0597">Phosphoprotein</keyword>
<keyword id="KW-1185">Reference proteome</keyword>
<keyword id="KW-0804">Transcription</keyword>
<keyword id="KW-0805">Transcription regulation</keyword>
<sequence length="473" mass="51966">MAQHDFVPAWLNFSTPQSSKSSTATFDKHGEHLSRGEGRFGISRRRHNSSDGFFNNGPLRTTGDSWHQPSLFRHDSVDSGVSKGAYAGTTGWHGSSRGHDGMSQRSGGSSTGNHRHWNGSFHSRKGCAFQEKTPTEIREEKKEDKVEKLQFEEEDFPSLNPEAGKQNQPCRPVGTPSGVWENPPSAKQPSKMLVIKKISKEDPAAAFSAAFTSSGSHHANGNKVSTMVPSVYKNLVPKPAPPPSKPNAWKANRTEHKPGSLCSSRESAFTNPISVTKPVGLAAGAGLHSPKESPSSTTPPIEISSSRLTKLTRRTTDRKSEFLKTLKDERNGDCSESRDCDKLEGLRLEGSHTPEPKENGEQGCLQNGLSLPMVEEGEVLSHSLEAEHRLLKAMGWQEYPENDESCLPLTEDELKEFHLRTEQLRRNGFGKNGLLQSRSCSLSSPWRSTCIAECEDSDSETSSSQTSDDDAWK</sequence>
<gene>
    <name type="primary">Gpbp1l1</name>
</gene>
<evidence type="ECO:0000250" key="1">
    <source>
        <dbReference type="UniProtKB" id="Q9HC44"/>
    </source>
</evidence>
<evidence type="ECO:0000256" key="2">
    <source>
        <dbReference type="SAM" id="MobiDB-lite"/>
    </source>
</evidence>
<evidence type="ECO:0000305" key="3"/>
<evidence type="ECO:0007744" key="4">
    <source>
    </source>
</evidence>
<evidence type="ECO:0007744" key="5">
    <source>
    </source>
</evidence>